<accession>Q0I8C9</accession>
<protein>
    <recommendedName>
        <fullName evidence="1">Serine--tRNA ligase</fullName>
        <ecNumber evidence="1">6.1.1.11</ecNumber>
    </recommendedName>
    <alternativeName>
        <fullName evidence="1">Seryl-tRNA synthetase</fullName>
        <shortName evidence="1">SerRS</shortName>
    </alternativeName>
    <alternativeName>
        <fullName evidence="1">Seryl-tRNA(Ser/Sec) synthetase</fullName>
    </alternativeName>
</protein>
<evidence type="ECO:0000255" key="1">
    <source>
        <dbReference type="HAMAP-Rule" id="MF_00176"/>
    </source>
</evidence>
<evidence type="ECO:0000256" key="2">
    <source>
        <dbReference type="SAM" id="MobiDB-lite"/>
    </source>
</evidence>
<proteinExistence type="inferred from homology"/>
<comment type="function">
    <text evidence="1">Catalyzes the attachment of serine to tRNA(Ser). Is also able to aminoacylate tRNA(Sec) with serine, to form the misacylated tRNA L-seryl-tRNA(Sec), which will be further converted into selenocysteinyl-tRNA(Sec).</text>
</comment>
<comment type="catalytic activity">
    <reaction evidence="1">
        <text>tRNA(Ser) + L-serine + ATP = L-seryl-tRNA(Ser) + AMP + diphosphate + H(+)</text>
        <dbReference type="Rhea" id="RHEA:12292"/>
        <dbReference type="Rhea" id="RHEA-COMP:9669"/>
        <dbReference type="Rhea" id="RHEA-COMP:9703"/>
        <dbReference type="ChEBI" id="CHEBI:15378"/>
        <dbReference type="ChEBI" id="CHEBI:30616"/>
        <dbReference type="ChEBI" id="CHEBI:33019"/>
        <dbReference type="ChEBI" id="CHEBI:33384"/>
        <dbReference type="ChEBI" id="CHEBI:78442"/>
        <dbReference type="ChEBI" id="CHEBI:78533"/>
        <dbReference type="ChEBI" id="CHEBI:456215"/>
        <dbReference type="EC" id="6.1.1.11"/>
    </reaction>
</comment>
<comment type="catalytic activity">
    <reaction evidence="1">
        <text>tRNA(Sec) + L-serine + ATP = L-seryl-tRNA(Sec) + AMP + diphosphate + H(+)</text>
        <dbReference type="Rhea" id="RHEA:42580"/>
        <dbReference type="Rhea" id="RHEA-COMP:9742"/>
        <dbReference type="Rhea" id="RHEA-COMP:10128"/>
        <dbReference type="ChEBI" id="CHEBI:15378"/>
        <dbReference type="ChEBI" id="CHEBI:30616"/>
        <dbReference type="ChEBI" id="CHEBI:33019"/>
        <dbReference type="ChEBI" id="CHEBI:33384"/>
        <dbReference type="ChEBI" id="CHEBI:78442"/>
        <dbReference type="ChEBI" id="CHEBI:78533"/>
        <dbReference type="ChEBI" id="CHEBI:456215"/>
        <dbReference type="EC" id="6.1.1.11"/>
    </reaction>
</comment>
<comment type="pathway">
    <text evidence="1">Aminoacyl-tRNA biosynthesis; selenocysteinyl-tRNA(Sec) biosynthesis; L-seryl-tRNA(Sec) from L-serine and tRNA(Sec): step 1/1.</text>
</comment>
<comment type="subunit">
    <text evidence="1">Homodimer. The tRNA molecule binds across the dimer.</text>
</comment>
<comment type="subcellular location">
    <subcellularLocation>
        <location evidence="1">Cytoplasm</location>
    </subcellularLocation>
</comment>
<comment type="domain">
    <text evidence="1">Consists of two distinct domains, a catalytic core and a N-terminal extension that is involved in tRNA binding.</text>
</comment>
<comment type="similarity">
    <text evidence="1">Belongs to the class-II aminoacyl-tRNA synthetase family. Type-1 seryl-tRNA synthetase subfamily.</text>
</comment>
<organism>
    <name type="scientific">Synechococcus sp. (strain CC9311)</name>
    <dbReference type="NCBI Taxonomy" id="64471"/>
    <lineage>
        <taxon>Bacteria</taxon>
        <taxon>Bacillati</taxon>
        <taxon>Cyanobacteriota</taxon>
        <taxon>Cyanophyceae</taxon>
        <taxon>Synechococcales</taxon>
        <taxon>Synechococcaceae</taxon>
        <taxon>Synechococcus</taxon>
    </lineage>
</organism>
<name>SYS_SYNS3</name>
<keyword id="KW-0030">Aminoacyl-tRNA synthetase</keyword>
<keyword id="KW-0067">ATP-binding</keyword>
<keyword id="KW-0963">Cytoplasm</keyword>
<keyword id="KW-0436">Ligase</keyword>
<keyword id="KW-0547">Nucleotide-binding</keyword>
<keyword id="KW-0648">Protein biosynthesis</keyword>
<keyword id="KW-1185">Reference proteome</keyword>
<dbReference type="EC" id="6.1.1.11" evidence="1"/>
<dbReference type="EMBL" id="CP000435">
    <property type="protein sequence ID" value="ABI45435.1"/>
    <property type="molecule type" value="Genomic_DNA"/>
</dbReference>
<dbReference type="RefSeq" id="WP_011620005.1">
    <property type="nucleotide sequence ID" value="NC_008319.1"/>
</dbReference>
<dbReference type="SMR" id="Q0I8C9"/>
<dbReference type="STRING" id="64471.sync_2091"/>
<dbReference type="KEGG" id="syg:sync_2091"/>
<dbReference type="eggNOG" id="COG0172">
    <property type="taxonomic scope" value="Bacteria"/>
</dbReference>
<dbReference type="HOGENOM" id="CLU_023797_1_1_3"/>
<dbReference type="OrthoDB" id="9804647at2"/>
<dbReference type="UniPathway" id="UPA00906">
    <property type="reaction ID" value="UER00895"/>
</dbReference>
<dbReference type="Proteomes" id="UP000001961">
    <property type="component" value="Chromosome"/>
</dbReference>
<dbReference type="GO" id="GO:0005737">
    <property type="term" value="C:cytoplasm"/>
    <property type="evidence" value="ECO:0007669"/>
    <property type="project" value="UniProtKB-SubCell"/>
</dbReference>
<dbReference type="GO" id="GO:0005524">
    <property type="term" value="F:ATP binding"/>
    <property type="evidence" value="ECO:0007669"/>
    <property type="project" value="UniProtKB-UniRule"/>
</dbReference>
<dbReference type="GO" id="GO:0004828">
    <property type="term" value="F:serine-tRNA ligase activity"/>
    <property type="evidence" value="ECO:0007669"/>
    <property type="project" value="UniProtKB-UniRule"/>
</dbReference>
<dbReference type="GO" id="GO:0016260">
    <property type="term" value="P:selenocysteine biosynthetic process"/>
    <property type="evidence" value="ECO:0007669"/>
    <property type="project" value="UniProtKB-UniRule"/>
</dbReference>
<dbReference type="GO" id="GO:0006434">
    <property type="term" value="P:seryl-tRNA aminoacylation"/>
    <property type="evidence" value="ECO:0007669"/>
    <property type="project" value="UniProtKB-UniRule"/>
</dbReference>
<dbReference type="CDD" id="cd00770">
    <property type="entry name" value="SerRS_core"/>
    <property type="match status" value="1"/>
</dbReference>
<dbReference type="Gene3D" id="3.30.930.10">
    <property type="entry name" value="Bira Bifunctional Protein, Domain 2"/>
    <property type="match status" value="1"/>
</dbReference>
<dbReference type="Gene3D" id="1.10.287.40">
    <property type="entry name" value="Serine-tRNA synthetase, tRNA binding domain"/>
    <property type="match status" value="1"/>
</dbReference>
<dbReference type="HAMAP" id="MF_00176">
    <property type="entry name" value="Ser_tRNA_synth_type1"/>
    <property type="match status" value="1"/>
</dbReference>
<dbReference type="InterPro" id="IPR002314">
    <property type="entry name" value="aa-tRNA-synt_IIb"/>
</dbReference>
<dbReference type="InterPro" id="IPR006195">
    <property type="entry name" value="aa-tRNA-synth_II"/>
</dbReference>
<dbReference type="InterPro" id="IPR045864">
    <property type="entry name" value="aa-tRNA-synth_II/BPL/LPL"/>
</dbReference>
<dbReference type="InterPro" id="IPR002317">
    <property type="entry name" value="Ser-tRNA-ligase_type_1"/>
</dbReference>
<dbReference type="InterPro" id="IPR015866">
    <property type="entry name" value="Ser-tRNA-synth_1_N"/>
</dbReference>
<dbReference type="InterPro" id="IPR042103">
    <property type="entry name" value="SerRS_1_N_sf"/>
</dbReference>
<dbReference type="InterPro" id="IPR033729">
    <property type="entry name" value="SerRS_core"/>
</dbReference>
<dbReference type="InterPro" id="IPR010978">
    <property type="entry name" value="tRNA-bd_arm"/>
</dbReference>
<dbReference type="NCBIfam" id="TIGR00414">
    <property type="entry name" value="serS"/>
    <property type="match status" value="1"/>
</dbReference>
<dbReference type="PANTHER" id="PTHR43697:SF1">
    <property type="entry name" value="SERINE--TRNA LIGASE"/>
    <property type="match status" value="1"/>
</dbReference>
<dbReference type="PANTHER" id="PTHR43697">
    <property type="entry name" value="SERYL-TRNA SYNTHETASE"/>
    <property type="match status" value="1"/>
</dbReference>
<dbReference type="Pfam" id="PF02403">
    <property type="entry name" value="Seryl_tRNA_N"/>
    <property type="match status" value="1"/>
</dbReference>
<dbReference type="Pfam" id="PF00587">
    <property type="entry name" value="tRNA-synt_2b"/>
    <property type="match status" value="1"/>
</dbReference>
<dbReference type="PIRSF" id="PIRSF001529">
    <property type="entry name" value="Ser-tRNA-synth_IIa"/>
    <property type="match status" value="1"/>
</dbReference>
<dbReference type="PRINTS" id="PR00981">
    <property type="entry name" value="TRNASYNTHSER"/>
</dbReference>
<dbReference type="SUPFAM" id="SSF55681">
    <property type="entry name" value="Class II aaRS and biotin synthetases"/>
    <property type="match status" value="1"/>
</dbReference>
<dbReference type="SUPFAM" id="SSF46589">
    <property type="entry name" value="tRNA-binding arm"/>
    <property type="match status" value="1"/>
</dbReference>
<dbReference type="PROSITE" id="PS50862">
    <property type="entry name" value="AA_TRNA_LIGASE_II"/>
    <property type="match status" value="1"/>
</dbReference>
<reference key="1">
    <citation type="journal article" date="2006" name="Proc. Natl. Acad. Sci. U.S.A.">
        <title>Genome sequence of Synechococcus CC9311: insights into adaptation to a coastal environment.</title>
        <authorList>
            <person name="Palenik B."/>
            <person name="Ren Q."/>
            <person name="Dupont C.L."/>
            <person name="Myers G.S."/>
            <person name="Heidelberg J.F."/>
            <person name="Badger J.H."/>
            <person name="Madupu R."/>
            <person name="Nelson W.C."/>
            <person name="Brinkac L.M."/>
            <person name="Dodson R.J."/>
            <person name="Durkin A.S."/>
            <person name="Daugherty S.C."/>
            <person name="Sullivan S.A."/>
            <person name="Khouri H."/>
            <person name="Mohamoud Y."/>
            <person name="Halpin R."/>
            <person name="Paulsen I.T."/>
        </authorList>
    </citation>
    <scope>NUCLEOTIDE SEQUENCE [LARGE SCALE GENOMIC DNA]</scope>
    <source>
        <strain>CC9311</strain>
    </source>
</reference>
<feature type="chain" id="PRO_1000019851" description="Serine--tRNA ligase">
    <location>
        <begin position="1"/>
        <end position="425"/>
    </location>
</feature>
<feature type="region of interest" description="Disordered" evidence="2">
    <location>
        <begin position="108"/>
        <end position="134"/>
    </location>
</feature>
<feature type="compositionally biased region" description="Basic and acidic residues" evidence="2">
    <location>
        <begin position="117"/>
        <end position="134"/>
    </location>
</feature>
<feature type="binding site" evidence="1">
    <location>
        <begin position="233"/>
        <end position="235"/>
    </location>
    <ligand>
        <name>L-serine</name>
        <dbReference type="ChEBI" id="CHEBI:33384"/>
    </ligand>
</feature>
<feature type="binding site" evidence="1">
    <location>
        <begin position="264"/>
        <end position="266"/>
    </location>
    <ligand>
        <name>ATP</name>
        <dbReference type="ChEBI" id="CHEBI:30616"/>
    </ligand>
</feature>
<feature type="binding site" evidence="1">
    <location>
        <position position="287"/>
    </location>
    <ligand>
        <name>L-serine</name>
        <dbReference type="ChEBI" id="CHEBI:33384"/>
    </ligand>
</feature>
<feature type="binding site" evidence="1">
    <location>
        <begin position="351"/>
        <end position="354"/>
    </location>
    <ligand>
        <name>ATP</name>
        <dbReference type="ChEBI" id="CHEBI:30616"/>
    </ligand>
</feature>
<feature type="binding site" evidence="1">
    <location>
        <position position="385"/>
    </location>
    <ligand>
        <name>L-serine</name>
        <dbReference type="ChEBI" id="CHEBI:33384"/>
    </ligand>
</feature>
<gene>
    <name evidence="1" type="primary">serS</name>
    <name type="ordered locus">sync_2091</name>
</gene>
<sequence>MLDQRLLRDNPELISRELGRRGMDVDLTGLQLIAKLQRDLEERRSGLQAEGNRIGKEVGQRIQAGADPKGAEVAELRLQGNQIKQKVAILEDEEKQLTAQLREELLSYPNLPSEACPDGRSEDDNKEVRRWGDPRVEDGLKEHWQIAEQLSLLDTERSVRIAQSRFVTLFGQGARLERALINFMLDLHTGKGYREVLPPVLVNSASLTGSGQLPKFAEESFRCADDDLWLTPTAEVPLTSLHRDEIIPSDQLPLRYVAYSPCFRREAGSYGRDTRGLIRLHQFNKVELYWFVHPEHSEEAHELITADAEAVLQALELPYRVLELCTGDLGFSAARTYDLEVWLAGAGAYREISSCSVCSDFQARRSSIRTKDGKTTRLVHTLNGSGLAIGRTMAALLENGQQPDGSVKLPQALVPYFGCDRLQPE</sequence>